<name>PIMA_MYCS2</name>
<keyword id="KW-0002">3D-structure</keyword>
<keyword id="KW-1003">Cell membrane</keyword>
<keyword id="KW-0328">Glycosyltransferase</keyword>
<keyword id="KW-0444">Lipid biosynthesis</keyword>
<keyword id="KW-0443">Lipid metabolism</keyword>
<keyword id="KW-0460">Magnesium</keyword>
<keyword id="KW-0472">Membrane</keyword>
<keyword id="KW-0594">Phospholipid biosynthesis</keyword>
<keyword id="KW-1208">Phospholipid metabolism</keyword>
<keyword id="KW-1185">Reference proteome</keyword>
<keyword id="KW-0808">Transferase</keyword>
<keyword id="KW-0843">Virulence</keyword>
<organism>
    <name type="scientific">Mycolicibacterium smegmatis (strain ATCC 700084 / mc(2)155)</name>
    <name type="common">Mycobacterium smegmatis</name>
    <dbReference type="NCBI Taxonomy" id="246196"/>
    <lineage>
        <taxon>Bacteria</taxon>
        <taxon>Bacillati</taxon>
        <taxon>Actinomycetota</taxon>
        <taxon>Actinomycetes</taxon>
        <taxon>Mycobacteriales</taxon>
        <taxon>Mycobacteriaceae</taxon>
        <taxon>Mycolicibacterium</taxon>
    </lineage>
</organism>
<dbReference type="EC" id="2.4.1.345" evidence="2 5"/>
<dbReference type="EMBL" id="CP000480">
    <property type="protein sequence ID" value="ABK72422.1"/>
    <property type="molecule type" value="Genomic_DNA"/>
</dbReference>
<dbReference type="EMBL" id="CP001663">
    <property type="protein sequence ID" value="AFP39325.1"/>
    <property type="molecule type" value="Genomic_DNA"/>
</dbReference>
<dbReference type="RefSeq" id="WP_011728703.1">
    <property type="nucleotide sequence ID" value="NZ_SIJM01000002.1"/>
</dbReference>
<dbReference type="RefSeq" id="YP_887254.1">
    <property type="nucleotide sequence ID" value="NC_008596.1"/>
</dbReference>
<dbReference type="PDB" id="2GEJ">
    <property type="method" value="X-ray"/>
    <property type="resolution" value="2.60 A"/>
    <property type="chains" value="A=1-386"/>
</dbReference>
<dbReference type="PDB" id="2GEK">
    <property type="method" value="X-ray"/>
    <property type="resolution" value="2.40 A"/>
    <property type="chains" value="A=1-386"/>
</dbReference>
<dbReference type="PDB" id="4N9W">
    <property type="method" value="X-ray"/>
    <property type="resolution" value="1.94 A"/>
    <property type="chains" value="A=1-386"/>
</dbReference>
<dbReference type="PDB" id="4NC9">
    <property type="method" value="X-ray"/>
    <property type="resolution" value="3.19 A"/>
    <property type="chains" value="A/B/C/D=1-386"/>
</dbReference>
<dbReference type="PDBsum" id="2GEJ"/>
<dbReference type="PDBsum" id="2GEK"/>
<dbReference type="PDBsum" id="4N9W"/>
<dbReference type="PDBsum" id="4NC9"/>
<dbReference type="SMR" id="A0QWG6"/>
<dbReference type="STRING" id="246196.MSMEG_2935"/>
<dbReference type="CAZy" id="GT4">
    <property type="family name" value="Glycosyltransferase Family 4"/>
</dbReference>
<dbReference type="PaxDb" id="246196-MSMEI_2861"/>
<dbReference type="GeneID" id="93457715"/>
<dbReference type="KEGG" id="msb:LJ00_14605"/>
<dbReference type="KEGG" id="msg:MSMEI_2861"/>
<dbReference type="KEGG" id="msm:MSMEG_2935"/>
<dbReference type="PATRIC" id="fig|246196.19.peg.2898"/>
<dbReference type="eggNOG" id="COG0438">
    <property type="taxonomic scope" value="Bacteria"/>
</dbReference>
<dbReference type="OrthoDB" id="5240531at2"/>
<dbReference type="BRENDA" id="2.4.1.345">
    <property type="organism ID" value="3512"/>
</dbReference>
<dbReference type="UniPathway" id="UPA00949"/>
<dbReference type="EvolutionaryTrace" id="A0QWG6"/>
<dbReference type="Proteomes" id="UP000000757">
    <property type="component" value="Chromosome"/>
</dbReference>
<dbReference type="Proteomes" id="UP000006158">
    <property type="component" value="Chromosome"/>
</dbReference>
<dbReference type="GO" id="GO:0005886">
    <property type="term" value="C:plasma membrane"/>
    <property type="evidence" value="ECO:0007669"/>
    <property type="project" value="UniProtKB-SubCell"/>
</dbReference>
<dbReference type="GO" id="GO:0004377">
    <property type="term" value="F:GDP-Man:Man3GlcNAc2-PP-Dol alpha-1,2-mannosyltransferase activity"/>
    <property type="evidence" value="ECO:0000314"/>
    <property type="project" value="UniProtKB"/>
</dbReference>
<dbReference type="GO" id="GO:0043750">
    <property type="term" value="F:phosphatidylinositol alpha-mannosyltransferase activity"/>
    <property type="evidence" value="ECO:0000314"/>
    <property type="project" value="UniProtKB"/>
</dbReference>
<dbReference type="GO" id="GO:0009247">
    <property type="term" value="P:glycolipid biosynthetic process"/>
    <property type="evidence" value="ECO:0000314"/>
    <property type="project" value="UniProtKB"/>
</dbReference>
<dbReference type="GO" id="GO:0046488">
    <property type="term" value="P:phosphatidylinositol metabolic process"/>
    <property type="evidence" value="ECO:0000314"/>
    <property type="project" value="UniProtKB"/>
</dbReference>
<dbReference type="GO" id="GO:0008654">
    <property type="term" value="P:phospholipid biosynthetic process"/>
    <property type="evidence" value="ECO:0007669"/>
    <property type="project" value="UniProtKB-KW"/>
</dbReference>
<dbReference type="CDD" id="cd03801">
    <property type="entry name" value="GT4_PimA-like"/>
    <property type="match status" value="1"/>
</dbReference>
<dbReference type="FunFam" id="3.40.50.2000:FF:000207">
    <property type="entry name" value="Phosphatidyl-myo-inositol mannosyltransferase"/>
    <property type="match status" value="1"/>
</dbReference>
<dbReference type="Gene3D" id="3.40.50.2000">
    <property type="entry name" value="Glycogen Phosphorylase B"/>
    <property type="match status" value="2"/>
</dbReference>
<dbReference type="InterPro" id="IPR028098">
    <property type="entry name" value="Glyco_trans_4-like_N"/>
</dbReference>
<dbReference type="InterPro" id="IPR050194">
    <property type="entry name" value="Glycosyltransferase_grp1"/>
</dbReference>
<dbReference type="PANTHER" id="PTHR45947">
    <property type="entry name" value="SULFOQUINOVOSYL TRANSFERASE SQD2"/>
    <property type="match status" value="1"/>
</dbReference>
<dbReference type="PANTHER" id="PTHR45947:SF3">
    <property type="entry name" value="SULFOQUINOVOSYL TRANSFERASE SQD2"/>
    <property type="match status" value="1"/>
</dbReference>
<dbReference type="Pfam" id="PF13692">
    <property type="entry name" value="Glyco_trans_1_4"/>
    <property type="match status" value="1"/>
</dbReference>
<dbReference type="Pfam" id="PF13439">
    <property type="entry name" value="Glyco_transf_4"/>
    <property type="match status" value="1"/>
</dbReference>
<dbReference type="SUPFAM" id="SSF53756">
    <property type="entry name" value="UDP-Glycosyltransferase/glycogen phosphorylase"/>
    <property type="match status" value="1"/>
</dbReference>
<accession>A0QWG6</accession>
<accession>I7FCT3</accession>
<feature type="chain" id="PRO_0000393732" description="Phosphatidyl-myo-inositol mannosyltransferase">
    <location>
        <begin position="1"/>
        <end position="386"/>
    </location>
</feature>
<feature type="binding site" evidence="11">
    <location>
        <position position="9"/>
    </location>
    <ligand>
        <name>GDP-alpha-D-mannose</name>
        <dbReference type="ChEBI" id="CHEBI:57527"/>
    </ligand>
</feature>
<feature type="binding site" evidence="3 4">
    <location>
        <position position="16"/>
    </location>
    <ligand>
        <name>GDP-alpha-D-mannose</name>
        <dbReference type="ChEBI" id="CHEBI:57527"/>
    </ligand>
</feature>
<feature type="binding site" evidence="12">
    <location>
        <position position="18"/>
    </location>
    <ligand>
        <name>a 1,2-diacyl-sn-glycero-3-phospho-(1D-myo-inositol)</name>
        <dbReference type="ChEBI" id="CHEBI:57880"/>
    </ligand>
</feature>
<feature type="binding site" evidence="12">
    <location>
        <begin position="62"/>
        <end position="63"/>
    </location>
    <ligand>
        <name>a 1,2-diacyl-sn-glycero-3-phospho-(1D-myo-inositol)</name>
        <dbReference type="ChEBI" id="CHEBI:57880"/>
    </ligand>
</feature>
<feature type="binding site" evidence="12">
    <location>
        <position position="68"/>
    </location>
    <ligand>
        <name>a 1,2-diacyl-sn-glycero-3-phospho-(1D-myo-inositol)</name>
        <dbReference type="ChEBI" id="CHEBI:57880"/>
    </ligand>
</feature>
<feature type="binding site" evidence="3 12">
    <location>
        <position position="196"/>
    </location>
    <ligand>
        <name>GDP-alpha-D-mannose</name>
        <dbReference type="ChEBI" id="CHEBI:57527"/>
    </ligand>
</feature>
<feature type="binding site" evidence="3 12">
    <location>
        <begin position="201"/>
        <end position="202"/>
    </location>
    <ligand>
        <name>GDP-alpha-D-mannose</name>
        <dbReference type="ChEBI" id="CHEBI:57527"/>
    </ligand>
</feature>
<feature type="binding site" evidence="3 4">
    <location>
        <begin position="251"/>
        <end position="253"/>
    </location>
    <ligand>
        <name>GDP-alpha-D-mannose</name>
        <dbReference type="ChEBI" id="CHEBI:57527"/>
    </ligand>
</feature>
<feature type="binding site" evidence="3 4">
    <location>
        <position position="256"/>
    </location>
    <ligand>
        <name>GDP-alpha-D-mannose</name>
        <dbReference type="ChEBI" id="CHEBI:57527"/>
    </ligand>
</feature>
<feature type="binding site" evidence="3">
    <location>
        <begin position="274"/>
        <end position="278"/>
    </location>
    <ligand>
        <name>GDP-alpha-D-mannose</name>
        <dbReference type="ChEBI" id="CHEBI:57527"/>
    </ligand>
</feature>
<feature type="binding site" evidence="3 4">
    <location>
        <position position="282"/>
    </location>
    <ligand>
        <name>GDP-alpha-D-mannose</name>
        <dbReference type="ChEBI" id="CHEBI:57527"/>
    </ligand>
</feature>
<feature type="site" description="Important for catalytic activity" evidence="3">
    <location>
        <position position="118"/>
    </location>
</feature>
<feature type="mutagenesis site" description="Loss of mannosyltransferase activity." evidence="3">
    <original>Y</original>
    <variation>A</variation>
    <location>
        <position position="9"/>
    </location>
</feature>
<feature type="mutagenesis site" description="Strong decrease of mannosyltransferase activity." evidence="4">
    <original>Q</original>
    <variation>A</variation>
    <location>
        <position position="18"/>
    </location>
</feature>
<feature type="mutagenesis site" description="Loss of mannosyltransferase activity." evidence="4">
    <original>Y</original>
    <variation>A</variation>
    <location>
        <position position="62"/>
    </location>
</feature>
<feature type="mutagenesis site" description="Loss of mannosyltransferase activity." evidence="4">
    <original>N</original>
    <variation>A</variation>
    <location>
        <position position="63"/>
    </location>
</feature>
<feature type="mutagenesis site" description="Same activity as the wild-type." evidence="4">
    <original>S</original>
    <variation>A</variation>
    <location>
        <position position="65"/>
    </location>
</feature>
<feature type="mutagenesis site" description="Loss of mannosyltransferase activity." evidence="4">
    <original>R</original>
    <variation>A</variation>
    <location>
        <position position="68"/>
    </location>
</feature>
<feature type="mutagenesis site" description="Same activity as the wild-type." evidence="4">
    <original>R</original>
    <variation>A</variation>
    <location>
        <position position="70"/>
    </location>
</feature>
<feature type="mutagenesis site" description="Loss of mannosyltransferase activity and the ability to bind phospholipid aggregates." evidence="3">
    <original>RKVKK</original>
    <variation>SSVSS</variation>
    <location>
        <begin position="77"/>
        <end position="81"/>
    </location>
</feature>
<feature type="mutagenesis site" description="Loss of mannosyltransferase activity." evidence="3">
    <original>H</original>
    <variation>A</variation>
    <location>
        <position position="118"/>
    </location>
</feature>
<feature type="mutagenesis site" description="23% less active than the wild-type." evidence="4">
    <original>K</original>
    <variation>A</variation>
    <location>
        <position position="123"/>
    </location>
</feature>
<feature type="mutagenesis site" description="Interacts only marginally with GDP and is inactive; when associated with C-359." evidence="7">
    <original>T</original>
    <variation>C</variation>
    <location>
        <position position="126"/>
    </location>
</feature>
<feature type="mutagenesis site" description="No change in the activity." evidence="3">
    <original>T</original>
    <variation>W</variation>
    <location>
        <position position="126"/>
    </location>
</feature>
<feature type="mutagenesis site" description="Loss of mannosyltransferase activity." evidence="4">
    <original>R</original>
    <variation>A</variation>
    <location>
        <position position="196"/>
    </location>
</feature>
<feature type="mutagenesis site" description="Loss of mannosyltransferase activity." evidence="4">
    <original>E</original>
    <variation>A</variation>
    <location>
        <position position="199"/>
    </location>
</feature>
<feature type="mutagenesis site" description="Loss of mannosyltransferase activity." evidence="3">
    <original>R</original>
    <variation>A</variation>
    <location>
        <position position="201"/>
    </location>
</feature>
<feature type="mutagenesis site" description="Loss of mannosyltransferase activity." evidence="3">
    <original>E</original>
    <variation>A</variation>
    <location>
        <position position="274"/>
    </location>
</feature>
<feature type="mutagenesis site" description="Interacts only marginally with GDP and is inactive; when associated with C-126." evidence="7">
    <original>V</original>
    <variation>C</variation>
    <location>
        <position position="359"/>
    </location>
</feature>
<feature type="strand" evidence="15">
    <location>
        <begin position="2"/>
        <end position="6"/>
    </location>
</feature>
<feature type="helix" evidence="15">
    <location>
        <begin position="16"/>
        <end position="30"/>
    </location>
</feature>
<feature type="strand" evidence="15">
    <location>
        <begin position="34"/>
        <end position="40"/>
    </location>
</feature>
<feature type="strand" evidence="15">
    <location>
        <begin position="51"/>
        <end position="53"/>
    </location>
</feature>
<feature type="strand" evidence="15">
    <location>
        <begin position="57"/>
        <end position="59"/>
    </location>
</feature>
<feature type="strand" evidence="15">
    <location>
        <begin position="66"/>
        <end position="71"/>
    </location>
</feature>
<feature type="helix" evidence="15">
    <location>
        <begin position="73"/>
        <end position="86"/>
    </location>
</feature>
<feature type="strand" evidence="15">
    <location>
        <begin position="89"/>
        <end position="94"/>
    </location>
</feature>
<feature type="strand" evidence="15">
    <location>
        <begin position="98"/>
        <end position="100"/>
    </location>
</feature>
<feature type="helix" evidence="15">
    <location>
        <begin position="101"/>
        <end position="108"/>
    </location>
</feature>
<feature type="strand" evidence="15">
    <location>
        <begin position="109"/>
        <end position="117"/>
    </location>
</feature>
<feature type="helix" evidence="15">
    <location>
        <begin position="120"/>
        <end position="123"/>
    </location>
</feature>
<feature type="helix" evidence="15">
    <location>
        <begin position="124"/>
        <end position="126"/>
    </location>
</feature>
<feature type="helix" evidence="15">
    <location>
        <begin position="128"/>
        <end position="131"/>
    </location>
</feature>
<feature type="helix" evidence="15">
    <location>
        <begin position="132"/>
        <end position="134"/>
    </location>
</feature>
<feature type="helix" evidence="15">
    <location>
        <begin position="135"/>
        <end position="138"/>
    </location>
</feature>
<feature type="strand" evidence="15">
    <location>
        <begin position="143"/>
        <end position="146"/>
    </location>
</feature>
<feature type="helix" evidence="14">
    <location>
        <begin position="149"/>
        <end position="159"/>
    </location>
</feature>
<feature type="strand" evidence="14">
    <location>
        <begin position="163"/>
        <end position="165"/>
    </location>
</feature>
<feature type="helix" evidence="15">
    <location>
        <begin position="172"/>
        <end position="176"/>
    </location>
</feature>
<feature type="strand" evidence="15">
    <location>
        <begin position="190"/>
        <end position="195"/>
    </location>
</feature>
<feature type="helix" evidence="15">
    <location>
        <begin position="200"/>
        <end position="202"/>
    </location>
</feature>
<feature type="helix" evidence="15">
    <location>
        <begin position="204"/>
        <end position="217"/>
    </location>
</feature>
<feature type="strand" evidence="15">
    <location>
        <begin position="222"/>
        <end position="227"/>
    </location>
</feature>
<feature type="helix" evidence="15">
    <location>
        <begin position="231"/>
        <end position="238"/>
    </location>
</feature>
<feature type="helix" evidence="15">
    <location>
        <begin position="239"/>
        <end position="244"/>
    </location>
</feature>
<feature type="strand" evidence="15">
    <location>
        <begin position="245"/>
        <end position="250"/>
    </location>
</feature>
<feature type="helix" evidence="15">
    <location>
        <begin position="253"/>
        <end position="262"/>
    </location>
</feature>
<feature type="strand" evidence="15">
    <location>
        <begin position="264"/>
        <end position="268"/>
    </location>
</feature>
<feature type="helix" evidence="15">
    <location>
        <begin position="278"/>
        <end position="286"/>
    </location>
</feature>
<feature type="strand" evidence="15">
    <location>
        <begin position="289"/>
        <end position="293"/>
    </location>
</feature>
<feature type="helix" evidence="15">
    <location>
        <begin position="296"/>
        <end position="301"/>
    </location>
</feature>
<feature type="helix" evidence="15">
    <location>
        <begin position="303"/>
        <end position="305"/>
    </location>
</feature>
<feature type="strand" evidence="15">
    <location>
        <begin position="307"/>
        <end position="311"/>
    </location>
</feature>
<feature type="helix" evidence="15">
    <location>
        <begin position="316"/>
        <end position="328"/>
    </location>
</feature>
<feature type="helix" evidence="15">
    <location>
        <begin position="330"/>
        <end position="343"/>
    </location>
</feature>
<feature type="helix" evidence="15">
    <location>
        <begin position="344"/>
        <end position="347"/>
    </location>
</feature>
<feature type="helix" evidence="15">
    <location>
        <begin position="349"/>
        <end position="363"/>
    </location>
</feature>
<feature type="strand" evidence="16">
    <location>
        <begin position="371"/>
        <end position="373"/>
    </location>
</feature>
<reference key="1">
    <citation type="submission" date="2006-10" db="EMBL/GenBank/DDBJ databases">
        <authorList>
            <person name="Fleischmann R.D."/>
            <person name="Dodson R.J."/>
            <person name="Haft D.H."/>
            <person name="Merkel J.S."/>
            <person name="Nelson W.C."/>
            <person name="Fraser C.M."/>
        </authorList>
    </citation>
    <scope>NUCLEOTIDE SEQUENCE [LARGE SCALE GENOMIC DNA]</scope>
    <source>
        <strain>ATCC 700084 / mc(2)155</strain>
    </source>
</reference>
<reference key="2">
    <citation type="journal article" date="2007" name="Genome Biol.">
        <title>Interrupted coding sequences in Mycobacterium smegmatis: authentic mutations or sequencing errors?</title>
        <authorList>
            <person name="Deshayes C."/>
            <person name="Perrodou E."/>
            <person name="Gallien S."/>
            <person name="Euphrasie D."/>
            <person name="Schaeffer C."/>
            <person name="Van-Dorsselaer A."/>
            <person name="Poch O."/>
            <person name="Lecompte O."/>
            <person name="Reyrat J.-M."/>
        </authorList>
    </citation>
    <scope>NUCLEOTIDE SEQUENCE [LARGE SCALE GENOMIC DNA]</scope>
    <source>
        <strain>ATCC 700084 / mc(2)155</strain>
    </source>
</reference>
<reference key="3">
    <citation type="journal article" date="2009" name="Genome Res.">
        <title>Ortho-proteogenomics: multiple proteomes investigation through orthology and a new MS-based protocol.</title>
        <authorList>
            <person name="Gallien S."/>
            <person name="Perrodou E."/>
            <person name="Carapito C."/>
            <person name="Deshayes C."/>
            <person name="Reyrat J.-M."/>
            <person name="Van Dorsselaer A."/>
            <person name="Poch O."/>
            <person name="Schaeffer C."/>
            <person name="Lecompte O."/>
        </authorList>
    </citation>
    <scope>NUCLEOTIDE SEQUENCE [LARGE SCALE GENOMIC DNA]</scope>
    <source>
        <strain>ATCC 700084 / mc(2)155</strain>
    </source>
</reference>
<reference key="4">
    <citation type="journal article" date="2002" name="J. Biol. Chem.">
        <title>Definition of the first mannosylation step in phosphatidylinositol mannoside synthesis. PimA is essential for growth of mycobacteria.</title>
        <authorList>
            <person name="Kordulakova J."/>
            <person name="Gilleron M."/>
            <person name="Mikusova K."/>
            <person name="Puzo G."/>
            <person name="Brennan P.J."/>
            <person name="Gicquel B."/>
            <person name="Jackson M."/>
        </authorList>
    </citation>
    <scope>FUNCTION AS A MANNOSYLTRANSFERASE</scope>
    <scope>CATALYTIC ACTIVITY</scope>
    <scope>SUBCELLULAR LOCATION</scope>
</reference>
<reference key="5">
    <citation type="journal article" date="2009" name="J. Biol. Chem.">
        <title>New insights into the early steps of phosphatidylinositol mannoside biosynthesis in mycobacteria: PimB' is an essential enzyme of Mycobacterium smegmatis.</title>
        <authorList>
            <person name="Guerin M.E."/>
            <person name="Kaur D."/>
            <person name="Somashekar B.S."/>
            <person name="Gibbs S."/>
            <person name="Gest P."/>
            <person name="Chatterjee D."/>
            <person name="Brennan P.J."/>
            <person name="Jackson M."/>
        </authorList>
    </citation>
    <scope>FUNCTION IN AC1PIM2 BIOSYNTHESIS</scope>
    <scope>CATALYTIC ACTIVITY</scope>
    <scope>PATHWAY</scope>
</reference>
<reference key="6">
    <citation type="journal article" date="2009" name="J. Biol. Chem.">
        <title>Substrate-induced conformational changes in the essential peripheral membrane-associated mannosyltransferase PimA from mycobacteria: implications for catalysis.</title>
        <authorList>
            <person name="Guerin M.E."/>
            <person name="Schaeffer F."/>
            <person name="Chaffotte A."/>
            <person name="Gest P."/>
            <person name="Giganti D."/>
            <person name="Kordulakova J."/>
            <person name="van der Woerd M."/>
            <person name="Jackson M."/>
            <person name="Alzari P.M."/>
        </authorList>
    </citation>
    <scope>FUNCTION</scope>
    <scope>MUTAGENESIS OF GLN-18; TYR-62; ASN-63; SER-65; ARG-68; ARG-70; LYS-123; ARG-196 AND GLU-199</scope>
    <scope>SUBCELLULAR LOCATION</scope>
    <scope>SUBUNIT</scope>
</reference>
<reference key="7">
    <citation type="journal article" date="2013" name="J. Biol. Chem.">
        <title>Conformational plasticity of the essential membrane-associated mannosyltransferase PimA from mycobacteria.</title>
        <authorList>
            <person name="Giganti D."/>
            <person name="Alegre-Cebollada J."/>
            <person name="Urresti S."/>
            <person name="Albesa-Jove D."/>
            <person name="Rodrigo-Unzueta A."/>
            <person name="Comino N."/>
            <person name="Kachala M."/>
            <person name="Lopez-Fernandez S."/>
            <person name="Svergun D.I."/>
            <person name="Fernandez J.M."/>
            <person name="Guerin M.E."/>
        </authorList>
    </citation>
    <scope>SUBUNIT</scope>
</reference>
<reference key="8">
    <citation type="journal article" date="2007" name="J. Biol. Chem.">
        <title>Molecular recognition and interfacial catalysis by the essential phosphatidylinositol mannosyltransferase PimA from mycobacteria.</title>
        <authorList>
            <person name="Guerin M.E."/>
            <person name="Kordulakova J."/>
            <person name="Schaeffer F."/>
            <person name="Svetlikova Z."/>
            <person name="Buschiazzo A."/>
            <person name="Giganti D."/>
            <person name="Gicquel B."/>
            <person name="Mikusova K."/>
            <person name="Jackson M."/>
            <person name="Alzari P.M."/>
        </authorList>
    </citation>
    <scope>X-RAY CRYSTALLOGRAPHY (2.4 ANGSTROMS) IN COMPLEX WITH GDP AND GDP-MANNOSE</scope>
    <scope>MUTAGENESIS OF TYR-9; 77-ARG--LYS-81; HIS-118; THR-126; ARG-201 AND GLU-274</scope>
</reference>
<reference key="9">
    <citation type="journal article" date="2015" name="Nat. Chem. Biol.">
        <title>Secondary structure reshuffling modulates glycosyltransferase function at the membrane.</title>
        <authorList>
            <person name="Giganti D."/>
            <person name="Albesa-Jove D."/>
            <person name="Urresti S."/>
            <person name="Rodrigo-Unzueta A."/>
            <person name="Martinez M.A."/>
            <person name="Comino N."/>
            <person name="Barilone N."/>
            <person name="Bellinzoni M."/>
            <person name="Chenal A."/>
            <person name="Guerin M.E."/>
            <person name="Alzari P.M."/>
        </authorList>
    </citation>
    <scope>X-RAY CRYSTALLOGRAPHY (1.8 ANGSTROMS)</scope>
    <scope>MUTAGENESIS OF THR-126 AND VAL-359</scope>
</reference>
<evidence type="ECO:0000250" key="1">
    <source>
        <dbReference type="UniProtKB" id="P9WMZ5"/>
    </source>
</evidence>
<evidence type="ECO:0000269" key="2">
    <source>
    </source>
</evidence>
<evidence type="ECO:0000269" key="3">
    <source>
    </source>
</evidence>
<evidence type="ECO:0000269" key="4">
    <source>
    </source>
</evidence>
<evidence type="ECO:0000269" key="5">
    <source>
    </source>
</evidence>
<evidence type="ECO:0000269" key="6">
    <source>
    </source>
</evidence>
<evidence type="ECO:0000269" key="7">
    <source>
    </source>
</evidence>
<evidence type="ECO:0000303" key="8">
    <source>
    </source>
</evidence>
<evidence type="ECO:0000305" key="9"/>
<evidence type="ECO:0000305" key="10">
    <source>
    </source>
</evidence>
<evidence type="ECO:0000305" key="11">
    <source>
    </source>
</evidence>
<evidence type="ECO:0000305" key="12">
    <source>
    </source>
</evidence>
<evidence type="ECO:0000305" key="13">
    <source>
    </source>
</evidence>
<evidence type="ECO:0007829" key="14">
    <source>
        <dbReference type="PDB" id="2GEK"/>
    </source>
</evidence>
<evidence type="ECO:0007829" key="15">
    <source>
        <dbReference type="PDB" id="4N9W"/>
    </source>
</evidence>
<evidence type="ECO:0007829" key="16">
    <source>
        <dbReference type="PDB" id="4NC9"/>
    </source>
</evidence>
<comment type="function">
    <text evidence="2 4 5">Involved in the biosynthesis of phosphatidyl-myo-inositol mannosides (PIM) which are early precursors in the biosynthesis of lipomannans (LM) and lipoarabinomannans (LAM). Catalyzes the addition of a mannosyl residue from GDP-D-mannose (GDP-Man) to the position 2 of the carrier lipid phosphatidyl-myo-inositol (PI) to generate a phosphatidyl-myo-inositol bearing an alpha-1,2-linked mannose residue (PIM1) (PubMed:12068013, PubMed:19520856, PubMed:19638342). In contrary to PimB, the mannosyltransferase PimA is unable to transfer a mannose residue to the position 6 of the phosphatidyl-myo-inositol of PIM1 (PubMed:19638342).</text>
</comment>
<comment type="catalytic activity">
    <reaction evidence="2 5">
        <text>a 1,2-diacyl-sn-glycero-3-phospho-(1D-myo-inositol) + GDP-alpha-D-mannose = a 1,2-diacyl-sn-glycero-3-phospho-[alpha-D-mannopyranosyl-(1&lt;-&gt;6)-D-myo-inositol] + GDP + H(+)</text>
        <dbReference type="Rhea" id="RHEA:47368"/>
        <dbReference type="ChEBI" id="CHEBI:15378"/>
        <dbReference type="ChEBI" id="CHEBI:57527"/>
        <dbReference type="ChEBI" id="CHEBI:57880"/>
        <dbReference type="ChEBI" id="CHEBI:58189"/>
        <dbReference type="ChEBI" id="CHEBI:87673"/>
        <dbReference type="EC" id="2.4.1.345"/>
    </reaction>
</comment>
<comment type="cofactor">
    <cofactor evidence="1">
        <name>Mg(2+)</name>
        <dbReference type="ChEBI" id="CHEBI:18420"/>
    </cofactor>
</comment>
<comment type="pathway">
    <text evidence="13">Phospholipid metabolism; phosphatidylinositol metabolism.</text>
</comment>
<comment type="subunit">
    <text evidence="4 6">Monomer.</text>
</comment>
<comment type="subcellular location">
    <subcellularLocation>
        <location evidence="10 12">Cell membrane</location>
        <topology evidence="12">Peripheral membrane protein</topology>
        <orientation evidence="12">Cytoplasmic side</orientation>
    </subcellularLocation>
</comment>
<comment type="miscellaneous">
    <text evidence="9">Was identified as a high-confidence drug target.</text>
</comment>
<comment type="similarity">
    <text evidence="9">Belongs to the glycosyltransferase group 1 family. Glycosyltransferase 4 subfamily.</text>
</comment>
<sequence>MRIGMVCPYSFDVPGGVQSHVLQLAEVLRDAGHEVSVLAPASPHVKLPDYVVSGGKAVPIPYNGSVARLRFGPATHRKVKKWIAEGDFDVLHIHEPNAPSLSMLALQAAEGPIVATFHTSTTKSLTLSVFQGILRPYHEKIIGRIAVSDLARRWQMEALGSDAVEIPNGVDVASFADAPLLDGYPREGRTVLFLGRYDEPRKGMAVLLAALPKLVARFPDVEILIVGRGDEDELREQAGDLAGHLRFLGQVDDATKASAMRSADVYCAPHLGGESFGIVLVEAMAAGTAVVASDLDAFRRVLADGDAGRLVPVDDADGMAAALIGILEDDQLRAGYVARASERVHRYDWSVVSAQIMRVYETVSGAGIKVQVSGAANRDETAGESV</sequence>
<gene>
    <name evidence="8" type="primary">pimA</name>
    <name type="ordered locus">MSMEG_2935</name>
    <name type="ordered locus">MSMEI_2861</name>
</gene>
<protein>
    <recommendedName>
        <fullName evidence="8">Phosphatidyl-myo-inositol mannosyltransferase</fullName>
        <ecNumber evidence="2 5">2.4.1.345</ecNumber>
    </recommendedName>
    <alternativeName>
        <fullName evidence="8">Alpha-mannosyltransferase</fullName>
    </alternativeName>
    <alternativeName>
        <fullName evidence="8">GDP-mannose-dependent alpha-(1-2)-phosphatidylinositol mannosyltransferase</fullName>
    </alternativeName>
    <alternativeName>
        <fullName evidence="9">Guanosine diphosphomannose-phosphatidyl-inositol alpha-mannosyltransferase</fullName>
    </alternativeName>
    <alternativeName>
        <fullName evidence="8">Phosphatidylinositol alpha-mannosyltransferase</fullName>
        <shortName evidence="8">PI alpha-mannosyltransferase</shortName>
    </alternativeName>
</protein>
<proteinExistence type="evidence at protein level"/>